<keyword id="KW-0210">Decarboxylase</keyword>
<keyword id="KW-0456">Lyase</keyword>
<keyword id="KW-0663">Pyridoxal phosphate</keyword>
<keyword id="KW-1185">Reference proteome</keyword>
<sequence>MATFKEHLQERSAHSIGRVNAHGYEDSNFLLTKLTENKMSCPMTISMLAPTLGTVGRINEESRTRRNAGYPINFEFDFGPVIEFLNMRLNNAGDPFMECNYGIHSKKFEIAVLDWFARLWELPKDQYWGYVTSGGTEGNMHGLLVGRELFPEGIIYTSCDSHYSIFKAAKMYRVQCIKIDTLFSGEMDYADFRRKLLQNTRSPAIVNVNIGTTMKGAVDDLDEVVMILENCGFANRFYIHCDSALVGLMMPFIKQAPKLTFKKPIGSICISGHKFIGCPIPCGVLITRLMDINHVMSTNIEYISSNDTTIAGSRNGHAPIFLWYALKRIGYNGLCKTVENCLKNAQYLALRLREMGVSVFLNALSITVVFERPNDETFVRKWQLACQGKIAHVVVMPNVSLERINMFLEEFTKSRIALHQDKCVAGDVSQENCLCSLHLDRKKEAV</sequence>
<dbReference type="EC" id="4.1.1.-"/>
<dbReference type="EMBL" id="AL731602">
    <property type="protein sequence ID" value="CAE05435.2"/>
    <property type="molecule type" value="Genomic_DNA"/>
</dbReference>
<dbReference type="EMBL" id="AL731612">
    <property type="protein sequence ID" value="CAE04954.2"/>
    <property type="molecule type" value="Genomic_DNA"/>
</dbReference>
<dbReference type="EMBL" id="AP008210">
    <property type="status" value="NOT_ANNOTATED_CDS"/>
    <property type="molecule type" value="Genomic_DNA"/>
</dbReference>
<dbReference type="EMBL" id="AP014960">
    <property type="status" value="NOT_ANNOTATED_CDS"/>
    <property type="molecule type" value="Genomic_DNA"/>
</dbReference>
<dbReference type="SMR" id="Q7X8D4"/>
<dbReference type="FunCoup" id="Q7X8D4">
    <property type="interactions" value="2"/>
</dbReference>
<dbReference type="STRING" id="39947.Q7X8D4"/>
<dbReference type="PaxDb" id="39947-Q7X8D4"/>
<dbReference type="InParanoid" id="Q7X8D4"/>
<dbReference type="PlantReactome" id="R-OSA-1119556">
    <property type="pathway name" value="Choline biosynthesis I"/>
</dbReference>
<dbReference type="Proteomes" id="UP000000763">
    <property type="component" value="Chromosome 4"/>
</dbReference>
<dbReference type="Proteomes" id="UP000059680">
    <property type="component" value="Chromosome 4"/>
</dbReference>
<dbReference type="GO" id="GO:0030170">
    <property type="term" value="F:pyridoxal phosphate binding"/>
    <property type="evidence" value="ECO:0007669"/>
    <property type="project" value="InterPro"/>
</dbReference>
<dbReference type="GO" id="GO:0102705">
    <property type="term" value="F:serine decarboxylase activity"/>
    <property type="evidence" value="ECO:0007669"/>
    <property type="project" value="RHEA"/>
</dbReference>
<dbReference type="GO" id="GO:0019752">
    <property type="term" value="P:carboxylic acid metabolic process"/>
    <property type="evidence" value="ECO:0007669"/>
    <property type="project" value="InterPro"/>
</dbReference>
<dbReference type="Gene3D" id="3.90.1150.10">
    <property type="entry name" value="Aspartate Aminotransferase, domain 1"/>
    <property type="match status" value="1"/>
</dbReference>
<dbReference type="Gene3D" id="3.40.640.10">
    <property type="entry name" value="Type I PLP-dependent aspartate aminotransferase-like (Major domain)"/>
    <property type="match status" value="1"/>
</dbReference>
<dbReference type="InterPro" id="IPR051151">
    <property type="entry name" value="Group_II_Decarboxylase"/>
</dbReference>
<dbReference type="InterPro" id="IPR002129">
    <property type="entry name" value="PyrdxlP-dep_de-COase"/>
</dbReference>
<dbReference type="InterPro" id="IPR015424">
    <property type="entry name" value="PyrdxlP-dep_Trfase"/>
</dbReference>
<dbReference type="InterPro" id="IPR015421">
    <property type="entry name" value="PyrdxlP-dep_Trfase_major"/>
</dbReference>
<dbReference type="InterPro" id="IPR015422">
    <property type="entry name" value="PyrdxlP-dep_Trfase_small"/>
</dbReference>
<dbReference type="InterPro" id="IPR021115">
    <property type="entry name" value="Pyridoxal-P_BS"/>
</dbReference>
<dbReference type="NCBIfam" id="NF002748">
    <property type="entry name" value="PRK02769.1"/>
    <property type="match status" value="1"/>
</dbReference>
<dbReference type="PANTHER" id="PTHR46101">
    <property type="match status" value="1"/>
</dbReference>
<dbReference type="PANTHER" id="PTHR46101:SF8">
    <property type="entry name" value="SERINE DECARBOXYLASE 2"/>
    <property type="match status" value="1"/>
</dbReference>
<dbReference type="Pfam" id="PF00282">
    <property type="entry name" value="Pyridoxal_deC"/>
    <property type="match status" value="1"/>
</dbReference>
<dbReference type="SUPFAM" id="SSF53383">
    <property type="entry name" value="PLP-dependent transferases"/>
    <property type="match status" value="1"/>
</dbReference>
<dbReference type="PROSITE" id="PS00392">
    <property type="entry name" value="DDC_GAD_HDC_YDC"/>
    <property type="match status" value="1"/>
</dbReference>
<name>SDC3_ORYSJ</name>
<evidence type="ECO:0000250" key="1"/>
<evidence type="ECO:0000305" key="2"/>
<organism>
    <name type="scientific">Oryza sativa subsp. japonica</name>
    <name type="common">Rice</name>
    <dbReference type="NCBI Taxonomy" id="39947"/>
    <lineage>
        <taxon>Eukaryota</taxon>
        <taxon>Viridiplantae</taxon>
        <taxon>Streptophyta</taxon>
        <taxon>Embryophyta</taxon>
        <taxon>Tracheophyta</taxon>
        <taxon>Spermatophyta</taxon>
        <taxon>Magnoliopsida</taxon>
        <taxon>Liliopsida</taxon>
        <taxon>Poales</taxon>
        <taxon>Poaceae</taxon>
        <taxon>BOP clade</taxon>
        <taxon>Oryzoideae</taxon>
        <taxon>Oryzeae</taxon>
        <taxon>Oryzinae</taxon>
        <taxon>Oryza</taxon>
        <taxon>Oryza sativa</taxon>
    </lineage>
</organism>
<gene>
    <name type="ordered locus">LOC_Os04g04640</name>
    <name type="ORF">OSJNBa0059H15.18</name>
    <name type="ORF">OSJNBa0070D17.5</name>
</gene>
<comment type="function">
    <text evidence="1">Catalyzes the biosynthesis of ethanolamine from serine. Decarboxylation of free serine is the major source of ethanolamine production in plants and ethanolamine metabolism is crucial for the synthesis of choline, phosphatidylethanolamine (PE) and phosphatidylcholine (PC), and thus for plant growth (By similarity).</text>
</comment>
<comment type="catalytic activity">
    <reaction>
        <text>L-serine + H(+) = ethanolamine + CO2</text>
        <dbReference type="Rhea" id="RHEA:45824"/>
        <dbReference type="ChEBI" id="CHEBI:15378"/>
        <dbReference type="ChEBI" id="CHEBI:16526"/>
        <dbReference type="ChEBI" id="CHEBI:33384"/>
        <dbReference type="ChEBI" id="CHEBI:57603"/>
    </reaction>
</comment>
<comment type="cofactor">
    <cofactor evidence="1">
        <name>pyridoxal 5'-phosphate</name>
        <dbReference type="ChEBI" id="CHEBI:597326"/>
    </cofactor>
</comment>
<comment type="similarity">
    <text evidence="2">Belongs to the group II decarboxylase family.</text>
</comment>
<accession>Q7X8D4</accession>
<proteinExistence type="inferred from homology"/>
<protein>
    <recommendedName>
        <fullName>Serine decarboxylase 3</fullName>
        <ecNumber>4.1.1.-</ecNumber>
    </recommendedName>
</protein>
<reference key="1">
    <citation type="journal article" date="2002" name="Nature">
        <title>Sequence and analysis of rice chromosome 4.</title>
        <authorList>
            <person name="Feng Q."/>
            <person name="Zhang Y."/>
            <person name="Hao P."/>
            <person name="Wang S."/>
            <person name="Fu G."/>
            <person name="Huang Y."/>
            <person name="Li Y."/>
            <person name="Zhu J."/>
            <person name="Liu Y."/>
            <person name="Hu X."/>
            <person name="Jia P."/>
            <person name="Zhang Y."/>
            <person name="Zhao Q."/>
            <person name="Ying K."/>
            <person name="Yu S."/>
            <person name="Tang Y."/>
            <person name="Weng Q."/>
            <person name="Zhang L."/>
            <person name="Lu Y."/>
            <person name="Mu J."/>
            <person name="Lu Y."/>
            <person name="Zhang L.S."/>
            <person name="Yu Z."/>
            <person name="Fan D."/>
            <person name="Liu X."/>
            <person name="Lu T."/>
            <person name="Li C."/>
            <person name="Wu Y."/>
            <person name="Sun T."/>
            <person name="Lei H."/>
            <person name="Li T."/>
            <person name="Hu H."/>
            <person name="Guan J."/>
            <person name="Wu M."/>
            <person name="Zhang R."/>
            <person name="Zhou B."/>
            <person name="Chen Z."/>
            <person name="Chen L."/>
            <person name="Jin Z."/>
            <person name="Wang R."/>
            <person name="Yin H."/>
            <person name="Cai Z."/>
            <person name="Ren S."/>
            <person name="Lv G."/>
            <person name="Gu W."/>
            <person name="Zhu G."/>
            <person name="Tu Y."/>
            <person name="Jia J."/>
            <person name="Zhang Y."/>
            <person name="Chen J."/>
            <person name="Kang H."/>
            <person name="Chen X."/>
            <person name="Shao C."/>
            <person name="Sun Y."/>
            <person name="Hu Q."/>
            <person name="Zhang X."/>
            <person name="Zhang W."/>
            <person name="Wang L."/>
            <person name="Ding C."/>
            <person name="Sheng H."/>
            <person name="Gu J."/>
            <person name="Chen S."/>
            <person name="Ni L."/>
            <person name="Zhu F."/>
            <person name="Chen W."/>
            <person name="Lan L."/>
            <person name="Lai Y."/>
            <person name="Cheng Z."/>
            <person name="Gu M."/>
            <person name="Jiang J."/>
            <person name="Li J."/>
            <person name="Hong G."/>
            <person name="Xue Y."/>
            <person name="Han B."/>
        </authorList>
    </citation>
    <scope>NUCLEOTIDE SEQUENCE [LARGE SCALE GENOMIC DNA]</scope>
    <source>
        <strain>cv. Nipponbare</strain>
    </source>
</reference>
<reference key="2">
    <citation type="journal article" date="2005" name="Nature">
        <title>The map-based sequence of the rice genome.</title>
        <authorList>
            <consortium name="International rice genome sequencing project (IRGSP)"/>
        </authorList>
    </citation>
    <scope>NUCLEOTIDE SEQUENCE [LARGE SCALE GENOMIC DNA]</scope>
    <source>
        <strain>cv. Nipponbare</strain>
    </source>
</reference>
<reference key="3">
    <citation type="journal article" date="2008" name="Nucleic Acids Res.">
        <title>The rice annotation project database (RAP-DB): 2008 update.</title>
        <authorList>
            <consortium name="The rice annotation project (RAP)"/>
        </authorList>
    </citation>
    <scope>GENOME REANNOTATION</scope>
    <source>
        <strain>cv. Nipponbare</strain>
    </source>
</reference>
<reference key="4">
    <citation type="journal article" date="2013" name="Rice">
        <title>Improvement of the Oryza sativa Nipponbare reference genome using next generation sequence and optical map data.</title>
        <authorList>
            <person name="Kawahara Y."/>
            <person name="de la Bastide M."/>
            <person name="Hamilton J.P."/>
            <person name="Kanamori H."/>
            <person name="McCombie W.R."/>
            <person name="Ouyang S."/>
            <person name="Schwartz D.C."/>
            <person name="Tanaka T."/>
            <person name="Wu J."/>
            <person name="Zhou S."/>
            <person name="Childs K.L."/>
            <person name="Davidson R.M."/>
            <person name="Lin H."/>
            <person name="Quesada-Ocampo L."/>
            <person name="Vaillancourt B."/>
            <person name="Sakai H."/>
            <person name="Lee S.S."/>
            <person name="Kim J."/>
            <person name="Numa H."/>
            <person name="Itoh T."/>
            <person name="Buell C.R."/>
            <person name="Matsumoto T."/>
        </authorList>
    </citation>
    <scope>GENOME REANNOTATION</scope>
    <source>
        <strain>cv. Nipponbare</strain>
    </source>
</reference>
<feature type="chain" id="PRO_0000429510" description="Serine decarboxylase 3">
    <location>
        <begin position="1"/>
        <end position="446"/>
    </location>
</feature>
<feature type="binding site" evidence="1">
    <location>
        <position position="162"/>
    </location>
    <ligand>
        <name>substrate</name>
    </ligand>
</feature>
<feature type="modified residue" description="N6-(pyridoxal phosphate)lysine" evidence="1">
    <location>
        <position position="274"/>
    </location>
</feature>